<dbReference type="EC" id="7.1.1.-"/>
<dbReference type="EMBL" id="CP000053">
    <property type="protein sequence ID" value="AAY61414.1"/>
    <property type="molecule type" value="Genomic_DNA"/>
</dbReference>
<dbReference type="SMR" id="Q4UM09"/>
<dbReference type="STRING" id="315456.RF_0563"/>
<dbReference type="KEGG" id="rfe:RF_0563"/>
<dbReference type="eggNOG" id="COG1905">
    <property type="taxonomic scope" value="Bacteria"/>
</dbReference>
<dbReference type="HOGENOM" id="CLU_054362_2_0_5"/>
<dbReference type="OrthoDB" id="9807941at2"/>
<dbReference type="Proteomes" id="UP000008548">
    <property type="component" value="Chromosome"/>
</dbReference>
<dbReference type="GO" id="GO:0051537">
    <property type="term" value="F:2 iron, 2 sulfur cluster binding"/>
    <property type="evidence" value="ECO:0007669"/>
    <property type="project" value="UniProtKB-KW"/>
</dbReference>
<dbReference type="GO" id="GO:0046872">
    <property type="term" value="F:metal ion binding"/>
    <property type="evidence" value="ECO:0007669"/>
    <property type="project" value="UniProtKB-KW"/>
</dbReference>
<dbReference type="GO" id="GO:0003954">
    <property type="term" value="F:NADH dehydrogenase activity"/>
    <property type="evidence" value="ECO:0007669"/>
    <property type="project" value="TreeGrafter"/>
</dbReference>
<dbReference type="GO" id="GO:0048038">
    <property type="term" value="F:quinone binding"/>
    <property type="evidence" value="ECO:0007669"/>
    <property type="project" value="UniProtKB-KW"/>
</dbReference>
<dbReference type="CDD" id="cd03064">
    <property type="entry name" value="TRX_Fd_NuoE"/>
    <property type="match status" value="1"/>
</dbReference>
<dbReference type="FunFam" id="3.40.30.10:FF:000022">
    <property type="entry name" value="NADH dehydrogenase flavoprotein 2, mitochondrial"/>
    <property type="match status" value="1"/>
</dbReference>
<dbReference type="FunFam" id="1.10.10.1590:FF:000001">
    <property type="entry name" value="NADH-quinone oxidoreductase subunit E"/>
    <property type="match status" value="1"/>
</dbReference>
<dbReference type="Gene3D" id="3.40.30.10">
    <property type="entry name" value="Glutaredoxin"/>
    <property type="match status" value="1"/>
</dbReference>
<dbReference type="Gene3D" id="1.10.10.1590">
    <property type="entry name" value="NADH-quinone oxidoreductase subunit E"/>
    <property type="match status" value="1"/>
</dbReference>
<dbReference type="InterPro" id="IPR002023">
    <property type="entry name" value="NuoE-like"/>
</dbReference>
<dbReference type="InterPro" id="IPR042128">
    <property type="entry name" value="NuoE_dom"/>
</dbReference>
<dbReference type="InterPro" id="IPR041921">
    <property type="entry name" value="NuoE_N"/>
</dbReference>
<dbReference type="InterPro" id="IPR036249">
    <property type="entry name" value="Thioredoxin-like_sf"/>
</dbReference>
<dbReference type="NCBIfam" id="TIGR01958">
    <property type="entry name" value="nuoE_fam"/>
    <property type="match status" value="1"/>
</dbReference>
<dbReference type="NCBIfam" id="NF005725">
    <property type="entry name" value="PRK07539.1-5"/>
    <property type="match status" value="1"/>
</dbReference>
<dbReference type="PANTHER" id="PTHR10371:SF3">
    <property type="entry name" value="NADH DEHYDROGENASE [UBIQUINONE] FLAVOPROTEIN 2, MITOCHONDRIAL"/>
    <property type="match status" value="1"/>
</dbReference>
<dbReference type="PANTHER" id="PTHR10371">
    <property type="entry name" value="NADH DEHYDROGENASE UBIQUINONE FLAVOPROTEIN 2, MITOCHONDRIAL"/>
    <property type="match status" value="1"/>
</dbReference>
<dbReference type="Pfam" id="PF01257">
    <property type="entry name" value="2Fe-2S_thioredx"/>
    <property type="match status" value="1"/>
</dbReference>
<dbReference type="PIRSF" id="PIRSF000216">
    <property type="entry name" value="NADH_DH_24kDa"/>
    <property type="match status" value="1"/>
</dbReference>
<dbReference type="SUPFAM" id="SSF52833">
    <property type="entry name" value="Thioredoxin-like"/>
    <property type="match status" value="1"/>
</dbReference>
<dbReference type="PROSITE" id="PS01099">
    <property type="entry name" value="COMPLEX1_24K"/>
    <property type="match status" value="1"/>
</dbReference>
<accession>Q4UM09</accession>
<reference key="1">
    <citation type="journal article" date="2005" name="PLoS Biol.">
        <title>The genome sequence of Rickettsia felis identifies the first putative conjugative plasmid in an obligate intracellular parasite.</title>
        <authorList>
            <person name="Ogata H."/>
            <person name="Renesto P."/>
            <person name="Audic S."/>
            <person name="Robert C."/>
            <person name="Blanc G."/>
            <person name="Fournier P.-E."/>
            <person name="Parinello H."/>
            <person name="Claverie J.-M."/>
            <person name="Raoult D."/>
        </authorList>
    </citation>
    <scope>NUCLEOTIDE SEQUENCE [LARGE SCALE GENOMIC DNA]</scope>
    <source>
        <strain>ATCC VR-1525 / URRWXCal2</strain>
    </source>
</reference>
<gene>
    <name type="primary">nuoE</name>
    <name type="ordered locus">RF_0563</name>
</gene>
<sequence length="167" mass="19316">MSTNFTFDKKNLNLAEDIIKKYPPHGKRSAILPLLDLAQRQNGGWLPVPAIEYVANMLEMPYMRAYEVATFYSMFNLKRVGKYHIQVCTTTPCWLHGSDDIMKICEKKLGIKLKETTEDQKFTLSEIECLGACVNAPVVQINDDYYEDLTEEKMEKLIDEYSNDFKN</sequence>
<comment type="function">
    <text evidence="1">NDH-1 shuttles electrons from NADH, via FMN and iron-sulfur (Fe-S) centers, to quinones in the respiratory chain. Couples the redox reaction to proton translocation (for every two electrons transferred, four hydrogen ions are translocated across the cytoplasmic membrane), and thus conserves the redox energy in a proton gradient (By similarity).</text>
</comment>
<comment type="catalytic activity">
    <reaction>
        <text>a quinone + NADH + 5 H(+)(in) = a quinol + NAD(+) + 4 H(+)(out)</text>
        <dbReference type="Rhea" id="RHEA:57888"/>
        <dbReference type="ChEBI" id="CHEBI:15378"/>
        <dbReference type="ChEBI" id="CHEBI:24646"/>
        <dbReference type="ChEBI" id="CHEBI:57540"/>
        <dbReference type="ChEBI" id="CHEBI:57945"/>
        <dbReference type="ChEBI" id="CHEBI:132124"/>
    </reaction>
</comment>
<comment type="cofactor">
    <cofactor evidence="3">
        <name>[2Fe-2S] cluster</name>
        <dbReference type="ChEBI" id="CHEBI:190135"/>
    </cofactor>
    <text evidence="3">Binds 1 [2Fe-2S] cluster.</text>
</comment>
<comment type="similarity">
    <text evidence="3">Belongs to the complex I 24 kDa subunit family.</text>
</comment>
<proteinExistence type="inferred from homology"/>
<name>NUOE_RICFE</name>
<protein>
    <recommendedName>
        <fullName>NADH-quinone oxidoreductase subunit E</fullName>
        <ecNumber>7.1.1.-</ecNumber>
    </recommendedName>
    <alternativeName>
        <fullName>NADH dehydrogenase I subunit E</fullName>
    </alternativeName>
    <alternativeName>
        <fullName>NDH-1 subunit E</fullName>
    </alternativeName>
</protein>
<evidence type="ECO:0000250" key="1"/>
<evidence type="ECO:0000255" key="2"/>
<evidence type="ECO:0000305" key="3"/>
<organism>
    <name type="scientific">Rickettsia felis (strain ATCC VR-1525 / URRWXCal2)</name>
    <name type="common">Rickettsia azadi</name>
    <dbReference type="NCBI Taxonomy" id="315456"/>
    <lineage>
        <taxon>Bacteria</taxon>
        <taxon>Pseudomonadati</taxon>
        <taxon>Pseudomonadota</taxon>
        <taxon>Alphaproteobacteria</taxon>
        <taxon>Rickettsiales</taxon>
        <taxon>Rickettsiaceae</taxon>
        <taxon>Rickettsieae</taxon>
        <taxon>Rickettsia</taxon>
        <taxon>spotted fever group</taxon>
    </lineage>
</organism>
<feature type="chain" id="PRO_0000287855" description="NADH-quinone oxidoreductase subunit E">
    <location>
        <begin position="1"/>
        <end position="167"/>
    </location>
</feature>
<feature type="binding site" evidence="2">
    <location>
        <position position="88"/>
    </location>
    <ligand>
        <name>[2Fe-2S] cluster</name>
        <dbReference type="ChEBI" id="CHEBI:190135"/>
    </ligand>
</feature>
<feature type="binding site" evidence="2">
    <location>
        <position position="93"/>
    </location>
    <ligand>
        <name>[2Fe-2S] cluster</name>
        <dbReference type="ChEBI" id="CHEBI:190135"/>
    </ligand>
</feature>
<feature type="binding site" evidence="2">
    <location>
        <position position="129"/>
    </location>
    <ligand>
        <name>[2Fe-2S] cluster</name>
        <dbReference type="ChEBI" id="CHEBI:190135"/>
    </ligand>
</feature>
<feature type="binding site" evidence="2">
    <location>
        <position position="133"/>
    </location>
    <ligand>
        <name>[2Fe-2S] cluster</name>
        <dbReference type="ChEBI" id="CHEBI:190135"/>
    </ligand>
</feature>
<keyword id="KW-0001">2Fe-2S</keyword>
<keyword id="KW-0408">Iron</keyword>
<keyword id="KW-0411">Iron-sulfur</keyword>
<keyword id="KW-0479">Metal-binding</keyword>
<keyword id="KW-0520">NAD</keyword>
<keyword id="KW-0874">Quinone</keyword>
<keyword id="KW-1278">Translocase</keyword>